<sequence length="260" mass="29203">MTSNQRMLFYSCIAKGTVILAEFASKEEPGIEDLALRCIENVPPHHSMISHTVHKRTYALIIDGLFSYFAILDEVVAKSESVWLFNRLKSATESLMEDGSTADSLDNPTQHCLQSKLDPVFAEIAAIGGNHNKDLELEFGSPRSIAREIKSNNQSLDSSKGRKGGALMPLLGKPLRVLKNKKRLQTEAKSEGHWNEKKMDLGGGGKGVRNGLIHDHHHRQKAKQIWRKHVWIVLMFDLCICLVLFGIWLWICQGFQCIDG</sequence>
<feature type="chain" id="PRO_0000434813" description="Phytolongin Phyl2.1">
    <location>
        <begin position="1"/>
        <end position="260"/>
    </location>
</feature>
<feature type="transmembrane region" description="Helical; Anchor for type IV membrane protein" evidence="2">
    <location>
        <begin position="231"/>
        <end position="251"/>
    </location>
</feature>
<feature type="domain" description="Longin">
    <location>
        <begin position="12"/>
        <end position="114"/>
    </location>
</feature>
<proteinExistence type="evidence at transcript level"/>
<protein>
    <recommendedName>
        <fullName evidence="3">Phytolongin Phyl2.1</fullName>
    </recommendedName>
</protein>
<accession>Q9STP2</accession>
<organism>
    <name type="scientific">Arabidopsis thaliana</name>
    <name type="common">Mouse-ear cress</name>
    <dbReference type="NCBI Taxonomy" id="3702"/>
    <lineage>
        <taxon>Eukaryota</taxon>
        <taxon>Viridiplantae</taxon>
        <taxon>Streptophyta</taxon>
        <taxon>Embryophyta</taxon>
        <taxon>Tracheophyta</taxon>
        <taxon>Spermatophyta</taxon>
        <taxon>Magnoliopsida</taxon>
        <taxon>eudicotyledons</taxon>
        <taxon>Gunneridae</taxon>
        <taxon>Pentapetalae</taxon>
        <taxon>rosids</taxon>
        <taxon>malvids</taxon>
        <taxon>Brassicales</taxon>
        <taxon>Brassicaceae</taxon>
        <taxon>Camelineae</taxon>
        <taxon>Arabidopsis</taxon>
    </lineage>
</organism>
<keyword id="KW-0472">Membrane</keyword>
<keyword id="KW-0653">Protein transport</keyword>
<keyword id="KW-1185">Reference proteome</keyword>
<keyword id="KW-0812">Transmembrane</keyword>
<keyword id="KW-1133">Transmembrane helix</keyword>
<keyword id="KW-0813">Transport</keyword>
<reference key="1">
    <citation type="journal article" date="1999" name="Nature">
        <title>Sequence and analysis of chromosome 4 of the plant Arabidopsis thaliana.</title>
        <authorList>
            <person name="Mayer K.F.X."/>
            <person name="Schueller C."/>
            <person name="Wambutt R."/>
            <person name="Murphy G."/>
            <person name="Volckaert G."/>
            <person name="Pohl T."/>
            <person name="Duesterhoeft A."/>
            <person name="Stiekema W."/>
            <person name="Entian K.-D."/>
            <person name="Terryn N."/>
            <person name="Harris B."/>
            <person name="Ansorge W."/>
            <person name="Brandt P."/>
            <person name="Grivell L.A."/>
            <person name="Rieger M."/>
            <person name="Weichselgartner M."/>
            <person name="de Simone V."/>
            <person name="Obermaier B."/>
            <person name="Mache R."/>
            <person name="Mueller M."/>
            <person name="Kreis M."/>
            <person name="Delseny M."/>
            <person name="Puigdomenech P."/>
            <person name="Watson M."/>
            <person name="Schmidtheini T."/>
            <person name="Reichert B."/>
            <person name="Portetelle D."/>
            <person name="Perez-Alonso M."/>
            <person name="Boutry M."/>
            <person name="Bancroft I."/>
            <person name="Vos P."/>
            <person name="Hoheisel J."/>
            <person name="Zimmermann W."/>
            <person name="Wedler H."/>
            <person name="Ridley P."/>
            <person name="Langham S.-A."/>
            <person name="McCullagh B."/>
            <person name="Bilham L."/>
            <person name="Robben J."/>
            <person name="van der Schueren J."/>
            <person name="Grymonprez B."/>
            <person name="Chuang Y.-J."/>
            <person name="Vandenbussche F."/>
            <person name="Braeken M."/>
            <person name="Weltjens I."/>
            <person name="Voet M."/>
            <person name="Bastiaens I."/>
            <person name="Aert R."/>
            <person name="Defoor E."/>
            <person name="Weitzenegger T."/>
            <person name="Bothe G."/>
            <person name="Ramsperger U."/>
            <person name="Hilbert H."/>
            <person name="Braun M."/>
            <person name="Holzer E."/>
            <person name="Brandt A."/>
            <person name="Peters S."/>
            <person name="van Staveren M."/>
            <person name="Dirkse W."/>
            <person name="Mooijman P."/>
            <person name="Klein Lankhorst R."/>
            <person name="Rose M."/>
            <person name="Hauf J."/>
            <person name="Koetter P."/>
            <person name="Berneiser S."/>
            <person name="Hempel S."/>
            <person name="Feldpausch M."/>
            <person name="Lamberth S."/>
            <person name="Van den Daele H."/>
            <person name="De Keyser A."/>
            <person name="Buysshaert C."/>
            <person name="Gielen J."/>
            <person name="Villarroel R."/>
            <person name="De Clercq R."/>
            <person name="van Montagu M."/>
            <person name="Rogers J."/>
            <person name="Cronin A."/>
            <person name="Quail M.A."/>
            <person name="Bray-Allen S."/>
            <person name="Clark L."/>
            <person name="Doggett J."/>
            <person name="Hall S."/>
            <person name="Kay M."/>
            <person name="Lennard N."/>
            <person name="McLay K."/>
            <person name="Mayes R."/>
            <person name="Pettett A."/>
            <person name="Rajandream M.A."/>
            <person name="Lyne M."/>
            <person name="Benes V."/>
            <person name="Rechmann S."/>
            <person name="Borkova D."/>
            <person name="Bloecker H."/>
            <person name="Scharfe M."/>
            <person name="Grimm M."/>
            <person name="Loehnert T.-H."/>
            <person name="Dose S."/>
            <person name="de Haan M."/>
            <person name="Maarse A.C."/>
            <person name="Schaefer M."/>
            <person name="Mueller-Auer S."/>
            <person name="Gabel C."/>
            <person name="Fuchs M."/>
            <person name="Fartmann B."/>
            <person name="Granderath K."/>
            <person name="Dauner D."/>
            <person name="Herzl A."/>
            <person name="Neumann S."/>
            <person name="Argiriou A."/>
            <person name="Vitale D."/>
            <person name="Liguori R."/>
            <person name="Piravandi E."/>
            <person name="Massenet O."/>
            <person name="Quigley F."/>
            <person name="Clabauld G."/>
            <person name="Muendlein A."/>
            <person name="Felber R."/>
            <person name="Schnabl S."/>
            <person name="Hiller R."/>
            <person name="Schmidt W."/>
            <person name="Lecharny A."/>
            <person name="Aubourg S."/>
            <person name="Chefdor F."/>
            <person name="Cooke R."/>
            <person name="Berger C."/>
            <person name="Monfort A."/>
            <person name="Casacuberta E."/>
            <person name="Gibbons T."/>
            <person name="Weber N."/>
            <person name="Vandenbol M."/>
            <person name="Bargues M."/>
            <person name="Terol J."/>
            <person name="Torres A."/>
            <person name="Perez-Perez A."/>
            <person name="Purnelle B."/>
            <person name="Bent E."/>
            <person name="Johnson S."/>
            <person name="Tacon D."/>
            <person name="Jesse T."/>
            <person name="Heijnen L."/>
            <person name="Schwarz S."/>
            <person name="Scholler P."/>
            <person name="Heber S."/>
            <person name="Francs P."/>
            <person name="Bielke C."/>
            <person name="Frishman D."/>
            <person name="Haase D."/>
            <person name="Lemcke K."/>
            <person name="Mewes H.-W."/>
            <person name="Stocker S."/>
            <person name="Zaccaria P."/>
            <person name="Bevan M."/>
            <person name="Wilson R.K."/>
            <person name="de la Bastide M."/>
            <person name="Habermann K."/>
            <person name="Parnell L."/>
            <person name="Dedhia N."/>
            <person name="Gnoj L."/>
            <person name="Schutz K."/>
            <person name="Huang E."/>
            <person name="Spiegel L."/>
            <person name="Sekhon M."/>
            <person name="Murray J."/>
            <person name="Sheet P."/>
            <person name="Cordes M."/>
            <person name="Abu-Threideh J."/>
            <person name="Stoneking T."/>
            <person name="Kalicki J."/>
            <person name="Graves T."/>
            <person name="Harmon G."/>
            <person name="Edwards J."/>
            <person name="Latreille P."/>
            <person name="Courtney L."/>
            <person name="Cloud J."/>
            <person name="Abbott A."/>
            <person name="Scott K."/>
            <person name="Johnson D."/>
            <person name="Minx P."/>
            <person name="Bentley D."/>
            <person name="Fulton B."/>
            <person name="Miller N."/>
            <person name="Greco T."/>
            <person name="Kemp K."/>
            <person name="Kramer J."/>
            <person name="Fulton L."/>
            <person name="Mardis E."/>
            <person name="Dante M."/>
            <person name="Pepin K."/>
            <person name="Hillier L.W."/>
            <person name="Nelson J."/>
            <person name="Spieth J."/>
            <person name="Ryan E."/>
            <person name="Andrews S."/>
            <person name="Geisel C."/>
            <person name="Layman D."/>
            <person name="Du H."/>
            <person name="Ali J."/>
            <person name="Berghoff A."/>
            <person name="Jones K."/>
            <person name="Drone K."/>
            <person name="Cotton M."/>
            <person name="Joshu C."/>
            <person name="Antonoiu B."/>
            <person name="Zidanic M."/>
            <person name="Strong C."/>
            <person name="Sun H."/>
            <person name="Lamar B."/>
            <person name="Yordan C."/>
            <person name="Ma P."/>
            <person name="Zhong J."/>
            <person name="Preston R."/>
            <person name="Vil D."/>
            <person name="Shekher M."/>
            <person name="Matero A."/>
            <person name="Shah R."/>
            <person name="Swaby I.K."/>
            <person name="O'Shaughnessy A."/>
            <person name="Rodriguez M."/>
            <person name="Hoffman J."/>
            <person name="Till S."/>
            <person name="Granat S."/>
            <person name="Shohdy N."/>
            <person name="Hasegawa A."/>
            <person name="Hameed A."/>
            <person name="Lodhi M."/>
            <person name="Johnson A."/>
            <person name="Chen E."/>
            <person name="Marra M.A."/>
            <person name="Martienssen R."/>
            <person name="McCombie W.R."/>
        </authorList>
    </citation>
    <scope>NUCLEOTIDE SEQUENCE [LARGE SCALE GENOMIC DNA]</scope>
    <source>
        <strain>cv. Columbia</strain>
    </source>
</reference>
<reference key="2">
    <citation type="journal article" date="2017" name="Plant J.">
        <title>Araport11: a complete reannotation of the Arabidopsis thaliana reference genome.</title>
        <authorList>
            <person name="Cheng C.Y."/>
            <person name="Krishnakumar V."/>
            <person name="Chan A.P."/>
            <person name="Thibaud-Nissen F."/>
            <person name="Schobel S."/>
            <person name="Town C.D."/>
        </authorList>
    </citation>
    <scope>GENOME REANNOTATION</scope>
    <source>
        <strain>cv. Columbia</strain>
    </source>
</reference>
<reference key="3">
    <citation type="journal article" date="2003" name="Science">
        <title>Empirical analysis of transcriptional activity in the Arabidopsis genome.</title>
        <authorList>
            <person name="Yamada K."/>
            <person name="Lim J."/>
            <person name="Dale J.M."/>
            <person name="Chen H."/>
            <person name="Shinn P."/>
            <person name="Palm C.J."/>
            <person name="Southwick A.M."/>
            <person name="Wu H.C."/>
            <person name="Kim C.J."/>
            <person name="Nguyen M."/>
            <person name="Pham P.K."/>
            <person name="Cheuk R.F."/>
            <person name="Karlin-Newmann G."/>
            <person name="Liu S.X."/>
            <person name="Lam B."/>
            <person name="Sakano H."/>
            <person name="Wu T."/>
            <person name="Yu G."/>
            <person name="Miranda M."/>
            <person name="Quach H.L."/>
            <person name="Tripp M."/>
            <person name="Chang C.H."/>
            <person name="Lee J.M."/>
            <person name="Toriumi M.J."/>
            <person name="Chan M.M."/>
            <person name="Tang C.C."/>
            <person name="Onodera C.S."/>
            <person name="Deng J.M."/>
            <person name="Akiyama K."/>
            <person name="Ansari Y."/>
            <person name="Arakawa T."/>
            <person name="Banh J."/>
            <person name="Banno F."/>
            <person name="Bowser L."/>
            <person name="Brooks S.Y."/>
            <person name="Carninci P."/>
            <person name="Chao Q."/>
            <person name="Choy N."/>
            <person name="Enju A."/>
            <person name="Goldsmith A.D."/>
            <person name="Gurjal M."/>
            <person name="Hansen N.F."/>
            <person name="Hayashizaki Y."/>
            <person name="Johnson-Hopson C."/>
            <person name="Hsuan V.W."/>
            <person name="Iida K."/>
            <person name="Karnes M."/>
            <person name="Khan S."/>
            <person name="Koesema E."/>
            <person name="Ishida J."/>
            <person name="Jiang P.X."/>
            <person name="Jones T."/>
            <person name="Kawai J."/>
            <person name="Kamiya A."/>
            <person name="Meyers C."/>
            <person name="Nakajima M."/>
            <person name="Narusaka M."/>
            <person name="Seki M."/>
            <person name="Sakurai T."/>
            <person name="Satou M."/>
            <person name="Tamse R."/>
            <person name="Vaysberg M."/>
            <person name="Wallender E.K."/>
            <person name="Wong C."/>
            <person name="Yamamura Y."/>
            <person name="Yuan S."/>
            <person name="Shinozaki K."/>
            <person name="Davis R.W."/>
            <person name="Theologis A."/>
            <person name="Ecker J.R."/>
        </authorList>
    </citation>
    <scope>NUCLEOTIDE SEQUENCE [LARGE SCALE MRNA]</scope>
    <source>
        <strain>cv. Columbia</strain>
    </source>
</reference>
<reference key="4">
    <citation type="journal article" date="2009" name="BMC Genomics">
        <title>Comparative analysis of plant genomes allows the definition of the 'Phytolongins': a novel non-SNARE longin domain protein family.</title>
        <authorList>
            <person name="Vedovato M."/>
            <person name="Rossi V."/>
            <person name="Dacks J.B."/>
            <person name="Filippini F."/>
        </authorList>
    </citation>
    <scope>FUNCTION</scope>
    <scope>GENE FAMILY</scope>
    <scope>NOMENCLATURE</scope>
</reference>
<dbReference type="EMBL" id="AL078579">
    <property type="protein sequence ID" value="CAB43972.1"/>
    <property type="molecule type" value="Genomic_DNA"/>
</dbReference>
<dbReference type="EMBL" id="AL161571">
    <property type="protein sequence ID" value="CAB81433.1"/>
    <property type="molecule type" value="Genomic_DNA"/>
</dbReference>
<dbReference type="EMBL" id="CP002687">
    <property type="protein sequence ID" value="AEE85399.1"/>
    <property type="molecule type" value="Genomic_DNA"/>
</dbReference>
<dbReference type="EMBL" id="AY069904">
    <property type="protein sequence ID" value="AAL47455.1"/>
    <property type="molecule type" value="mRNA"/>
</dbReference>
<dbReference type="EMBL" id="AY142001">
    <property type="protein sequence ID" value="AAM98265.1"/>
    <property type="molecule type" value="mRNA"/>
</dbReference>
<dbReference type="PIR" id="T09023">
    <property type="entry name" value="T09023"/>
</dbReference>
<dbReference type="RefSeq" id="NP_194513.1">
    <property type="nucleotide sequence ID" value="NM_118922.5"/>
</dbReference>
<dbReference type="SMR" id="Q9STP2"/>
<dbReference type="FunCoup" id="Q9STP2">
    <property type="interactions" value="83"/>
</dbReference>
<dbReference type="STRING" id="3702.Q9STP2"/>
<dbReference type="iPTMnet" id="Q9STP2"/>
<dbReference type="PaxDb" id="3702-AT4G27840.1"/>
<dbReference type="ProteomicsDB" id="236676"/>
<dbReference type="EnsemblPlants" id="AT4G27840.1">
    <property type="protein sequence ID" value="AT4G27840.1"/>
    <property type="gene ID" value="AT4G27840"/>
</dbReference>
<dbReference type="GeneID" id="828897"/>
<dbReference type="Gramene" id="AT4G27840.1">
    <property type="protein sequence ID" value="AT4G27840.1"/>
    <property type="gene ID" value="AT4G27840"/>
</dbReference>
<dbReference type="KEGG" id="ath:AT4G27840"/>
<dbReference type="Araport" id="AT4G27840"/>
<dbReference type="TAIR" id="AT4G27840"/>
<dbReference type="eggNOG" id="ENOG502RYW5">
    <property type="taxonomic scope" value="Eukaryota"/>
</dbReference>
<dbReference type="HOGENOM" id="CLU_088757_0_0_1"/>
<dbReference type="InParanoid" id="Q9STP2"/>
<dbReference type="OMA" id="NPTQHCL"/>
<dbReference type="OrthoDB" id="1918034at2759"/>
<dbReference type="PhylomeDB" id="Q9STP2"/>
<dbReference type="PRO" id="PR:Q9STP2"/>
<dbReference type="Proteomes" id="UP000006548">
    <property type="component" value="Chromosome 4"/>
</dbReference>
<dbReference type="ExpressionAtlas" id="Q9STP2">
    <property type="expression patterns" value="baseline and differential"/>
</dbReference>
<dbReference type="GO" id="GO:0016020">
    <property type="term" value="C:membrane"/>
    <property type="evidence" value="ECO:0007669"/>
    <property type="project" value="UniProtKB-SubCell"/>
</dbReference>
<dbReference type="GO" id="GO:0015031">
    <property type="term" value="P:protein transport"/>
    <property type="evidence" value="ECO:0007669"/>
    <property type="project" value="UniProtKB-KW"/>
</dbReference>
<dbReference type="Gene3D" id="3.30.450.50">
    <property type="entry name" value="Longin domain"/>
    <property type="match status" value="1"/>
</dbReference>
<dbReference type="InterPro" id="IPR044783">
    <property type="entry name" value="PHYL"/>
</dbReference>
<dbReference type="PANTHER" id="PTHR47461">
    <property type="entry name" value="PHYTOLONGIN PHYL1.2"/>
    <property type="match status" value="1"/>
</dbReference>
<dbReference type="PANTHER" id="PTHR47461:SF4">
    <property type="entry name" value="PHYTOLONGIN PHYL2.1"/>
    <property type="match status" value="1"/>
</dbReference>
<name>PHL21_ARATH</name>
<evidence type="ECO:0000250" key="1">
    <source>
        <dbReference type="UniProtKB" id="Q12255"/>
    </source>
</evidence>
<evidence type="ECO:0000255" key="2"/>
<evidence type="ECO:0000303" key="3">
    <source>
    </source>
</evidence>
<evidence type="ECO:0000305" key="4"/>
<evidence type="ECO:0000305" key="5">
    <source>
    </source>
</evidence>
<evidence type="ECO:0000312" key="6">
    <source>
        <dbReference type="Araport" id="AT4G27840"/>
    </source>
</evidence>
<evidence type="ECO:0000312" key="7">
    <source>
        <dbReference type="EMBL" id="CAB43972.1"/>
    </source>
</evidence>
<comment type="function">
    <text evidence="5">Non-SNARE longin protein involved in membrane-trafficking machinery.</text>
</comment>
<comment type="subcellular location">
    <subcellularLocation>
        <location evidence="2">Membrane</location>
        <topology evidence="1">Single-pass type IV membrane protein</topology>
    </subcellularLocation>
</comment>
<comment type="similarity">
    <text evidence="4">Belongs to the synaptobrevin family.</text>
</comment>
<gene>
    <name evidence="3" type="primary">PHYL2.1</name>
    <name evidence="6" type="ordered locus">At4g27840</name>
    <name evidence="7" type="ORF">T27E11.80</name>
</gene>